<dbReference type="EC" id="3.1.1.96" evidence="1"/>
<dbReference type="EMBL" id="CP000485">
    <property type="protein sequence ID" value="ABK87207.1"/>
    <property type="molecule type" value="Genomic_DNA"/>
</dbReference>
<dbReference type="RefSeq" id="WP_001266953.1">
    <property type="nucleotide sequence ID" value="NC_008600.1"/>
</dbReference>
<dbReference type="SMR" id="A0RJ14"/>
<dbReference type="KEGG" id="btl:BALH_3987"/>
<dbReference type="HOGENOM" id="CLU_076901_1_0_9"/>
<dbReference type="GO" id="GO:0005737">
    <property type="term" value="C:cytoplasm"/>
    <property type="evidence" value="ECO:0007669"/>
    <property type="project" value="UniProtKB-SubCell"/>
</dbReference>
<dbReference type="GO" id="GO:0051500">
    <property type="term" value="F:D-tyrosyl-tRNA(Tyr) deacylase activity"/>
    <property type="evidence" value="ECO:0007669"/>
    <property type="project" value="TreeGrafter"/>
</dbReference>
<dbReference type="GO" id="GO:0106026">
    <property type="term" value="F:Gly-tRNA(Ala) deacylase activity"/>
    <property type="evidence" value="ECO:0007669"/>
    <property type="project" value="UniProtKB-UniRule"/>
</dbReference>
<dbReference type="GO" id="GO:0043908">
    <property type="term" value="F:Ser(Gly)-tRNA(Ala) hydrolase activity"/>
    <property type="evidence" value="ECO:0007669"/>
    <property type="project" value="UniProtKB-UniRule"/>
</dbReference>
<dbReference type="GO" id="GO:0000049">
    <property type="term" value="F:tRNA binding"/>
    <property type="evidence" value="ECO:0007669"/>
    <property type="project" value="UniProtKB-UniRule"/>
</dbReference>
<dbReference type="GO" id="GO:0019478">
    <property type="term" value="P:D-amino acid catabolic process"/>
    <property type="evidence" value="ECO:0007669"/>
    <property type="project" value="UniProtKB-UniRule"/>
</dbReference>
<dbReference type="CDD" id="cd00563">
    <property type="entry name" value="Dtyr_deacylase"/>
    <property type="match status" value="1"/>
</dbReference>
<dbReference type="FunFam" id="3.50.80.10:FF:000001">
    <property type="entry name" value="D-aminoacyl-tRNA deacylase"/>
    <property type="match status" value="1"/>
</dbReference>
<dbReference type="Gene3D" id="3.50.80.10">
    <property type="entry name" value="D-tyrosyl-tRNA(Tyr) deacylase"/>
    <property type="match status" value="1"/>
</dbReference>
<dbReference type="HAMAP" id="MF_00518">
    <property type="entry name" value="Deacylase_Dtd"/>
    <property type="match status" value="1"/>
</dbReference>
<dbReference type="InterPro" id="IPR003732">
    <property type="entry name" value="Daa-tRNA_deacyls_DTD"/>
</dbReference>
<dbReference type="InterPro" id="IPR023509">
    <property type="entry name" value="DTD-like_sf"/>
</dbReference>
<dbReference type="NCBIfam" id="TIGR00256">
    <property type="entry name" value="D-aminoacyl-tRNA deacylase"/>
    <property type="match status" value="1"/>
</dbReference>
<dbReference type="PANTHER" id="PTHR10472:SF5">
    <property type="entry name" value="D-AMINOACYL-TRNA DEACYLASE 1"/>
    <property type="match status" value="1"/>
</dbReference>
<dbReference type="PANTHER" id="PTHR10472">
    <property type="entry name" value="D-TYROSYL-TRNA TYR DEACYLASE"/>
    <property type="match status" value="1"/>
</dbReference>
<dbReference type="Pfam" id="PF02580">
    <property type="entry name" value="Tyr_Deacylase"/>
    <property type="match status" value="1"/>
</dbReference>
<dbReference type="SUPFAM" id="SSF69500">
    <property type="entry name" value="DTD-like"/>
    <property type="match status" value="1"/>
</dbReference>
<comment type="function">
    <text evidence="1">An aminoacyl-tRNA editing enzyme that deacylates mischarged D-aminoacyl-tRNAs. Also deacylates mischarged glycyl-tRNA(Ala), protecting cells against glycine mischarging by AlaRS. Acts via tRNA-based rather than protein-based catalysis; rejects L-amino acids rather than detecting D-amino acids in the active site. By recycling D-aminoacyl-tRNA to D-amino acids and free tRNA molecules, this enzyme counteracts the toxicity associated with the formation of D-aminoacyl-tRNA entities in vivo and helps enforce protein L-homochirality.</text>
</comment>
<comment type="catalytic activity">
    <reaction evidence="1">
        <text>glycyl-tRNA(Ala) + H2O = tRNA(Ala) + glycine + H(+)</text>
        <dbReference type="Rhea" id="RHEA:53744"/>
        <dbReference type="Rhea" id="RHEA-COMP:9657"/>
        <dbReference type="Rhea" id="RHEA-COMP:13640"/>
        <dbReference type="ChEBI" id="CHEBI:15377"/>
        <dbReference type="ChEBI" id="CHEBI:15378"/>
        <dbReference type="ChEBI" id="CHEBI:57305"/>
        <dbReference type="ChEBI" id="CHEBI:78442"/>
        <dbReference type="ChEBI" id="CHEBI:78522"/>
        <dbReference type="EC" id="3.1.1.96"/>
    </reaction>
</comment>
<comment type="catalytic activity">
    <reaction evidence="1">
        <text>a D-aminoacyl-tRNA + H2O = a tRNA + a D-alpha-amino acid + H(+)</text>
        <dbReference type="Rhea" id="RHEA:13953"/>
        <dbReference type="Rhea" id="RHEA-COMP:10123"/>
        <dbReference type="Rhea" id="RHEA-COMP:10124"/>
        <dbReference type="ChEBI" id="CHEBI:15377"/>
        <dbReference type="ChEBI" id="CHEBI:15378"/>
        <dbReference type="ChEBI" id="CHEBI:59871"/>
        <dbReference type="ChEBI" id="CHEBI:78442"/>
        <dbReference type="ChEBI" id="CHEBI:79333"/>
        <dbReference type="EC" id="3.1.1.96"/>
    </reaction>
</comment>
<comment type="subunit">
    <text evidence="1">Homodimer.</text>
</comment>
<comment type="subcellular location">
    <subcellularLocation>
        <location evidence="1">Cytoplasm</location>
    </subcellularLocation>
</comment>
<comment type="domain">
    <text evidence="1">A Gly-cisPro motif from one monomer fits into the active site of the other monomer to allow specific chiral rejection of L-amino acids.</text>
</comment>
<comment type="similarity">
    <text evidence="1">Belongs to the DTD family.</text>
</comment>
<proteinExistence type="inferred from homology"/>
<evidence type="ECO:0000255" key="1">
    <source>
        <dbReference type="HAMAP-Rule" id="MF_00518"/>
    </source>
</evidence>
<organism>
    <name type="scientific">Bacillus thuringiensis (strain Al Hakam)</name>
    <dbReference type="NCBI Taxonomy" id="412694"/>
    <lineage>
        <taxon>Bacteria</taxon>
        <taxon>Bacillati</taxon>
        <taxon>Bacillota</taxon>
        <taxon>Bacilli</taxon>
        <taxon>Bacillales</taxon>
        <taxon>Bacillaceae</taxon>
        <taxon>Bacillus</taxon>
        <taxon>Bacillus cereus group</taxon>
    </lineage>
</organism>
<keyword id="KW-0963">Cytoplasm</keyword>
<keyword id="KW-0378">Hydrolase</keyword>
<keyword id="KW-0694">RNA-binding</keyword>
<keyword id="KW-0820">tRNA-binding</keyword>
<name>DTD_BACAH</name>
<reference key="1">
    <citation type="journal article" date="2007" name="J. Bacteriol.">
        <title>The complete genome sequence of Bacillus thuringiensis Al Hakam.</title>
        <authorList>
            <person name="Challacombe J.F."/>
            <person name="Altherr M.R."/>
            <person name="Xie G."/>
            <person name="Bhotika S.S."/>
            <person name="Brown N."/>
            <person name="Bruce D."/>
            <person name="Campbell C.S."/>
            <person name="Campbell M.L."/>
            <person name="Chen J."/>
            <person name="Chertkov O."/>
            <person name="Cleland C."/>
            <person name="Dimitrijevic M."/>
            <person name="Doggett N.A."/>
            <person name="Fawcett J.J."/>
            <person name="Glavina T."/>
            <person name="Goodwin L.A."/>
            <person name="Green L.D."/>
            <person name="Han C.S."/>
            <person name="Hill K.K."/>
            <person name="Hitchcock P."/>
            <person name="Jackson P.J."/>
            <person name="Keim P."/>
            <person name="Kewalramani A.R."/>
            <person name="Longmire J."/>
            <person name="Lucas S."/>
            <person name="Malfatti S."/>
            <person name="Martinez D."/>
            <person name="McMurry K."/>
            <person name="Meincke L.J."/>
            <person name="Misra M."/>
            <person name="Moseman B.L."/>
            <person name="Mundt M."/>
            <person name="Munk A.C."/>
            <person name="Okinaka R.T."/>
            <person name="Parson-Quintana B."/>
            <person name="Reilly L.P."/>
            <person name="Richardson P."/>
            <person name="Robinson D.L."/>
            <person name="Saunders E."/>
            <person name="Tapia R."/>
            <person name="Tesmer J.G."/>
            <person name="Thayer N."/>
            <person name="Thompson L.S."/>
            <person name="Tice H."/>
            <person name="Ticknor L.O."/>
            <person name="Wills P.L."/>
            <person name="Gilna P."/>
            <person name="Brettin T.S."/>
        </authorList>
    </citation>
    <scope>NUCLEOTIDE SEQUENCE [LARGE SCALE GENOMIC DNA]</scope>
    <source>
        <strain>Al Hakam</strain>
    </source>
</reference>
<feature type="chain" id="PRO_1000050812" description="D-aminoacyl-tRNA deacylase">
    <location>
        <begin position="1"/>
        <end position="146"/>
    </location>
</feature>
<feature type="short sequence motif" description="Gly-cisPro motif, important for rejection of L-amino acids" evidence="1">
    <location>
        <begin position="137"/>
        <end position="138"/>
    </location>
</feature>
<sequence>MRVVLQRSKEASVTVDGEIVGQIPFGLTLLVGITHEDTEKDATYIAEKIANLRIFEDESGKMNHSVLDVEGQVLSISQFTLYGDCRKGRRPNFMDAAKPDYAEHLYDFFNEEVRKQGLHVETGEFGAMMDVSLINDGPVTLIVESK</sequence>
<gene>
    <name evidence="1" type="primary">dtd</name>
    <name type="ordered locus">BALH_3987</name>
</gene>
<accession>A0RJ14</accession>
<protein>
    <recommendedName>
        <fullName evidence="1">D-aminoacyl-tRNA deacylase</fullName>
        <shortName evidence="1">DTD</shortName>
        <ecNumber evidence="1">3.1.1.96</ecNumber>
    </recommendedName>
    <alternativeName>
        <fullName evidence="1">Gly-tRNA(Ala) deacylase</fullName>
    </alternativeName>
</protein>